<evidence type="ECO:0000255" key="1"/>
<evidence type="ECO:0000255" key="2">
    <source>
        <dbReference type="PROSITE-ProRule" id="PRU00038"/>
    </source>
</evidence>
<evidence type="ECO:0000256" key="3">
    <source>
        <dbReference type="SAM" id="MobiDB-lite"/>
    </source>
</evidence>
<evidence type="ECO:0000305" key="4"/>
<proteinExistence type="inferred from homology"/>
<organismHost>
    <name type="scientific">Acanthamoeba polyphaga</name>
    <name type="common">Amoeba</name>
    <dbReference type="NCBI Taxonomy" id="5757"/>
</organismHost>
<keyword id="KW-0325">Glycoprotein</keyword>
<keyword id="KW-0430">Lectin</keyword>
<keyword id="KW-1185">Reference proteome</keyword>
<keyword id="KW-0964">Secreted</keyword>
<keyword id="KW-0732">Signal</keyword>
<dbReference type="EMBL" id="AY653733">
    <property type="protein sequence ID" value="AAV50894.1"/>
    <property type="molecule type" value="Genomic_DNA"/>
</dbReference>
<dbReference type="SMR" id="Q5UR81"/>
<dbReference type="KEGG" id="vg:9925275"/>
<dbReference type="OrthoDB" id="35853at10239"/>
<dbReference type="Proteomes" id="UP000001134">
    <property type="component" value="Genome"/>
</dbReference>
<dbReference type="GO" id="GO:0005576">
    <property type="term" value="C:extracellular region"/>
    <property type="evidence" value="ECO:0007669"/>
    <property type="project" value="UniProtKB-SubCell"/>
</dbReference>
<dbReference type="GO" id="GO:0030246">
    <property type="term" value="F:carbohydrate binding"/>
    <property type="evidence" value="ECO:0007669"/>
    <property type="project" value="UniProtKB-KW"/>
</dbReference>
<dbReference type="Gene3D" id="2.90.10.10">
    <property type="entry name" value="Bulb-type lectin domain"/>
    <property type="match status" value="1"/>
</dbReference>
<dbReference type="InterPro" id="IPR001480">
    <property type="entry name" value="Bulb-type_lectin_dom"/>
</dbReference>
<dbReference type="InterPro" id="IPR036426">
    <property type="entry name" value="Bulb-type_lectin_dom_sf"/>
</dbReference>
<dbReference type="SMART" id="SM00108">
    <property type="entry name" value="B_lectin"/>
    <property type="match status" value="1"/>
</dbReference>
<dbReference type="SUPFAM" id="SSF51110">
    <property type="entry name" value="alpha-D-mannose-specific plant lectins"/>
    <property type="match status" value="1"/>
</dbReference>
<dbReference type="PROSITE" id="PS50927">
    <property type="entry name" value="BULB_LECTIN"/>
    <property type="match status" value="1"/>
</dbReference>
<organism>
    <name type="scientific">Acanthamoeba polyphaga mimivirus</name>
    <name type="common">APMV</name>
    <dbReference type="NCBI Taxonomy" id="212035"/>
    <lineage>
        <taxon>Viruses</taxon>
        <taxon>Varidnaviria</taxon>
        <taxon>Bamfordvirae</taxon>
        <taxon>Nucleocytoviricota</taxon>
        <taxon>Megaviricetes</taxon>
        <taxon>Imitervirales</taxon>
        <taxon>Mimiviridae</taxon>
        <taxon>Megamimivirinae</taxon>
        <taxon>Mimivirus</taxon>
        <taxon>Mimivirus bradfordmassiliense</taxon>
    </lineage>
</organism>
<protein>
    <recommendedName>
        <fullName>Putative lectin L633</fullName>
    </recommendedName>
</protein>
<comment type="subcellular location">
    <subcellularLocation>
        <location evidence="4">Secreted</location>
    </subcellularLocation>
</comment>
<feature type="signal peptide" evidence="1">
    <location>
        <begin position="1"/>
        <end position="25"/>
    </location>
</feature>
<feature type="chain" id="PRO_0000041780" description="Putative lectin L633">
    <location>
        <begin position="26"/>
        <end position="199"/>
    </location>
</feature>
<feature type="domain" description="Bulb-type lectin" evidence="2">
    <location>
        <begin position="84"/>
        <end position="195"/>
    </location>
</feature>
<feature type="region of interest" description="Disordered" evidence="3">
    <location>
        <begin position="35"/>
        <end position="74"/>
    </location>
</feature>
<feature type="compositionally biased region" description="Polar residues" evidence="3">
    <location>
        <begin position="35"/>
        <end position="48"/>
    </location>
</feature>
<feature type="compositionally biased region" description="Low complexity" evidence="3">
    <location>
        <begin position="49"/>
        <end position="73"/>
    </location>
</feature>
<feature type="glycosylation site" description="N-linked (GlcNAc...) asparagine; by host" evidence="1">
    <location>
        <position position="121"/>
    </location>
</feature>
<sequence length="199" mass="21604">MNILLLLMLLTSIILLVILIFLAYNEIMEKPTSSCITPAPESQSISPDQTTQLQTTTPVTSTPSNPTPTTIIPNLPPTLNPLSEIVSNGDNVLQQQQSLINGDFAASIQLDGNLCISNTKNQSVLWCSNSAELGQAPYFLLLRSDGNMCIQDSHNNPTWCSGVIGGQSPWKATLQSDGDLCINDYLGQELWCATRKLPN</sequence>
<gene>
    <name type="ordered locus">MIMI_L633</name>
</gene>
<reference key="1">
    <citation type="journal article" date="2004" name="Science">
        <title>The 1.2-megabase genome sequence of Mimivirus.</title>
        <authorList>
            <person name="Raoult D."/>
            <person name="Audic S."/>
            <person name="Robert C."/>
            <person name="Abergel C."/>
            <person name="Renesto P."/>
            <person name="Ogata H."/>
            <person name="La Scola B."/>
            <person name="Susan M."/>
            <person name="Claverie J.-M."/>
        </authorList>
    </citation>
    <scope>NUCLEOTIDE SEQUENCE [LARGE SCALE GENOMIC DNA]</scope>
    <source>
        <strain>Rowbotham-Bradford</strain>
    </source>
</reference>
<accession>Q5UR81</accession>
<name>YL633_MIMIV</name>